<evidence type="ECO:0000305" key="1"/>
<proteinExistence type="predicted"/>
<name>YNQ6_PARDE</name>
<accession>P29912</accession>
<protein>
    <recommendedName>
        <fullName>Uncharacterized 15.0 kDa protein in nqo9-nqo10 intergenic region</fullName>
    </recommendedName>
    <alternativeName>
        <fullName>URF6</fullName>
    </alternativeName>
</protein>
<organism>
    <name type="scientific">Paracoccus denitrificans</name>
    <dbReference type="NCBI Taxonomy" id="266"/>
    <lineage>
        <taxon>Bacteria</taxon>
        <taxon>Pseudomonadati</taxon>
        <taxon>Pseudomonadota</taxon>
        <taxon>Alphaproteobacteria</taxon>
        <taxon>Rhodobacterales</taxon>
        <taxon>Paracoccaceae</taxon>
        <taxon>Paracoccus</taxon>
    </lineage>
</organism>
<sequence length="134" mass="15002">MTDAFQKLFQQMLQSGQEMARAFNPALEHFDMRAMEKLVPTIPADMLEMWFGKTFNREGLDAKTRLLLTIGAITVQGALAEPQLRMTVRQALAAGATKREIAETIFQMSMFGGLPAMQKALEIAQSVYAEEDEE</sequence>
<reference key="1">
    <citation type="journal article" date="1993" name="Biochemistry">
        <title>DNA sequencing of the seven remaining structural genes of the gene cluster encoding the energy-transducing NADH-quinone oxidoreductase of Paracoccus denitrificans.</title>
        <authorList>
            <person name="Xu X."/>
            <person name="Matsuno-Yagi A."/>
            <person name="Yagi T."/>
        </authorList>
    </citation>
    <scope>NUCLEOTIDE SEQUENCE [GENOMIC DNA]</scope>
    <source>
        <strain>ATCC 13543 / NRRL B-3784 / NRC 449</strain>
    </source>
</reference>
<feature type="chain" id="PRO_0000066343" description="Uncharacterized 15.0 kDa protein in nqo9-nqo10 intergenic region">
    <location>
        <begin position="1"/>
        <end position="134"/>
    </location>
</feature>
<comment type="function">
    <text>May have a role in the regulation of NDH-1 biosynthesis.</text>
</comment>
<comment type="subcellular location">
    <subcellularLocation>
        <location evidence="1">Cell membrane</location>
        <topology evidence="1">Peripheral membrane protein</topology>
    </subcellularLocation>
</comment>
<keyword id="KW-1003">Cell membrane</keyword>
<keyword id="KW-0472">Membrane</keyword>
<dbReference type="EMBL" id="L02354">
    <property type="protein sequence ID" value="AAA25595.1"/>
    <property type="molecule type" value="Genomic_DNA"/>
</dbReference>
<dbReference type="PIR" id="E45456">
    <property type="entry name" value="E45456"/>
</dbReference>
<dbReference type="RefSeq" id="WP_011748522.1">
    <property type="nucleotide sequence ID" value="NZ_PPGA01000003.1"/>
</dbReference>
<dbReference type="SMR" id="P29912"/>
<dbReference type="GeneID" id="93450634"/>
<dbReference type="OMA" id="EMMFGNT"/>
<dbReference type="GO" id="GO:0005886">
    <property type="term" value="C:plasma membrane"/>
    <property type="evidence" value="ECO:0007669"/>
    <property type="project" value="UniProtKB-SubCell"/>
</dbReference>
<dbReference type="GO" id="GO:0051920">
    <property type="term" value="F:peroxiredoxin activity"/>
    <property type="evidence" value="ECO:0007669"/>
    <property type="project" value="InterPro"/>
</dbReference>
<dbReference type="Gene3D" id="1.20.1290.10">
    <property type="entry name" value="AhpD-like"/>
    <property type="match status" value="1"/>
</dbReference>
<dbReference type="InterPro" id="IPR052512">
    <property type="entry name" value="4CMD/NDH-1_regulator"/>
</dbReference>
<dbReference type="InterPro" id="IPR029032">
    <property type="entry name" value="AhpD-like"/>
</dbReference>
<dbReference type="InterPro" id="IPR003779">
    <property type="entry name" value="CMD-like"/>
</dbReference>
<dbReference type="PANTHER" id="PTHR33570">
    <property type="entry name" value="4-CARBOXYMUCONOLACTONE DECARBOXYLASE FAMILY PROTEIN"/>
    <property type="match status" value="1"/>
</dbReference>
<dbReference type="PANTHER" id="PTHR33570:SF2">
    <property type="entry name" value="CARBOXYMUCONOLACTONE DECARBOXYLASE-LIKE DOMAIN-CONTAINING PROTEIN"/>
    <property type="match status" value="1"/>
</dbReference>
<dbReference type="Pfam" id="PF02627">
    <property type="entry name" value="CMD"/>
    <property type="match status" value="1"/>
</dbReference>
<dbReference type="SUPFAM" id="SSF69118">
    <property type="entry name" value="AhpD-like"/>
    <property type="match status" value="1"/>
</dbReference>